<comment type="function">
    <text>Plays an important role in the mineralization of sulfates.</text>
</comment>
<comment type="catalytic activity">
    <reaction>
        <text>an aryl sulfate + H2O = a phenol + sulfate + H(+)</text>
        <dbReference type="Rhea" id="RHEA:17261"/>
        <dbReference type="ChEBI" id="CHEBI:15377"/>
        <dbReference type="ChEBI" id="CHEBI:15378"/>
        <dbReference type="ChEBI" id="CHEBI:16189"/>
        <dbReference type="ChEBI" id="CHEBI:33853"/>
        <dbReference type="ChEBI" id="CHEBI:140317"/>
        <dbReference type="EC" id="3.1.6.1"/>
    </reaction>
</comment>
<comment type="cofactor">
    <cofactor evidence="1">
        <name>Ca(2+)</name>
        <dbReference type="ChEBI" id="CHEBI:29108"/>
    </cofactor>
    <text evidence="1">Binds 1 Ca(2+) ion per subunit.</text>
</comment>
<comment type="subcellular location">
    <subcellularLocation>
        <location evidence="1">Periplasm</location>
    </subcellularLocation>
</comment>
<comment type="PTM">
    <text evidence="1">The conversion to 3-oxoalanine (also known as C-formylglycine, FGly), of a serine or cysteine residue in prokaryotes and of a cysteine residue in eukaryotes, is critical for catalytic activity.</text>
</comment>
<comment type="similarity">
    <text evidence="4">Belongs to the sulfatase family.</text>
</comment>
<proteinExistence type="evidence at protein level"/>
<sequence length="464" mass="51471">MNKKAMAAAVSMILAGGAHAAQQERPNVIVIIADDMGYSDISPFGGEIPTPNLQAMAEQGMRMSQYYTSPMSAPARSMLLTGNSNQQAGMGGMWWYDSTIGKEGYELRLTDRVTTMAERFKDAGYNTLMAGKWHLGFVPGATPKDRGFNHAFAFMGGGTSHFNDAIPLGTVEAFHTYYTRDGERVSLPDDFYSSEAYARQMNSWIKATPKEQPVFAWLAFTAPHDPLQAPDEWIKRFKGQYEQGYAEVYRQRIARLKALGIIHDDTPLPHLELDKEWEALTPEQQKYTAKVMQVYAAMIANMDAQIGTLMETLKQTGRDKNTLLVFLTDNGANPAQGFYYESTPEFWKQFDNSYDNVGRKGSFVSYGPHWANVSNAPYANYHKTTSAQGGINTDFMISGPGITRHGKIDASTMAVYDVAPTLYEFAGIDPNKSLAKKPVLPMIGVSLSAISPAKYRSRRAELRG</sequence>
<dbReference type="EC" id="3.1.6.1"/>
<dbReference type="EMBL" id="M31938">
    <property type="protein sequence ID" value="AAA25051.1"/>
    <property type="molecule type" value="Genomic_DNA"/>
</dbReference>
<dbReference type="PIR" id="B35159">
    <property type="entry name" value="B35159"/>
</dbReference>
<dbReference type="SMR" id="P20713"/>
<dbReference type="STRING" id="548.EAG7_02824"/>
<dbReference type="GO" id="GO:0042597">
    <property type="term" value="C:periplasmic space"/>
    <property type="evidence" value="ECO:0007669"/>
    <property type="project" value="UniProtKB-SubCell"/>
</dbReference>
<dbReference type="GO" id="GO:0004065">
    <property type="term" value="F:arylsulfatase activity"/>
    <property type="evidence" value="ECO:0007669"/>
    <property type="project" value="UniProtKB-EC"/>
</dbReference>
<dbReference type="GO" id="GO:0046872">
    <property type="term" value="F:metal ion binding"/>
    <property type="evidence" value="ECO:0007669"/>
    <property type="project" value="UniProtKB-KW"/>
</dbReference>
<dbReference type="CDD" id="cd16025">
    <property type="entry name" value="PAS_like"/>
    <property type="match status" value="1"/>
</dbReference>
<dbReference type="Gene3D" id="3.40.720.10">
    <property type="entry name" value="Alkaline Phosphatase, subunit A"/>
    <property type="match status" value="1"/>
</dbReference>
<dbReference type="InterPro" id="IPR017850">
    <property type="entry name" value="Alkaline_phosphatase_core_sf"/>
</dbReference>
<dbReference type="InterPro" id="IPR050738">
    <property type="entry name" value="Sulfatase"/>
</dbReference>
<dbReference type="InterPro" id="IPR024607">
    <property type="entry name" value="Sulfatase_CS"/>
</dbReference>
<dbReference type="InterPro" id="IPR000917">
    <property type="entry name" value="Sulfatase_N"/>
</dbReference>
<dbReference type="PANTHER" id="PTHR42693">
    <property type="entry name" value="ARYLSULFATASE FAMILY MEMBER"/>
    <property type="match status" value="1"/>
</dbReference>
<dbReference type="PANTHER" id="PTHR42693:SF53">
    <property type="entry name" value="ENDO-4-O-SULFATASE"/>
    <property type="match status" value="1"/>
</dbReference>
<dbReference type="Pfam" id="PF00884">
    <property type="entry name" value="Sulfatase"/>
    <property type="match status" value="1"/>
</dbReference>
<dbReference type="SUPFAM" id="SSF53649">
    <property type="entry name" value="Alkaline phosphatase-like"/>
    <property type="match status" value="1"/>
</dbReference>
<dbReference type="PROSITE" id="PS00523">
    <property type="entry name" value="SULFATASE_1"/>
    <property type="match status" value="1"/>
</dbReference>
<dbReference type="PROSITE" id="PS00149">
    <property type="entry name" value="SULFATASE_2"/>
    <property type="match status" value="1"/>
</dbReference>
<name>ATSA_KLEAE</name>
<keyword id="KW-0106">Calcium</keyword>
<keyword id="KW-0903">Direct protein sequencing</keyword>
<keyword id="KW-0378">Hydrolase</keyword>
<keyword id="KW-0479">Metal-binding</keyword>
<keyword id="KW-0574">Periplasm</keyword>
<keyword id="KW-0732">Signal</keyword>
<accession>P20713</accession>
<reference key="1">
    <citation type="journal article" date="1990" name="J. Bacteriol.">
        <title>A sulfur- and tyramine-regulated Klebsiella aerogenes operon containing the arylsulfatase (atsA) gene and the atsB gene.</title>
        <authorList>
            <person name="Murooka Y."/>
            <person name="Ishibashi K."/>
            <person name="Yasumoto M."/>
            <person name="Sasaki M."/>
            <person name="Sugino H."/>
            <person name="Azakami H."/>
            <person name="Yamashita M."/>
        </authorList>
    </citation>
    <scope>NUCLEOTIDE SEQUENCE [GENOMIC DNA]</scope>
    <scope>PROTEIN SEQUENCE OF 21-33</scope>
</reference>
<gene>
    <name type="primary">atsA</name>
</gene>
<protein>
    <recommendedName>
        <fullName>Arylsulfatase</fullName>
        <shortName>AS</shortName>
        <ecNumber>3.1.6.1</ecNumber>
    </recommendedName>
    <alternativeName>
        <fullName>Aryl-sulfate sulphohydrolase</fullName>
    </alternativeName>
</protein>
<organism>
    <name type="scientific">Klebsiella aerogenes</name>
    <name type="common">Enterobacter aerogenes</name>
    <dbReference type="NCBI Taxonomy" id="548"/>
    <lineage>
        <taxon>Bacteria</taxon>
        <taxon>Pseudomonadati</taxon>
        <taxon>Pseudomonadota</taxon>
        <taxon>Gammaproteobacteria</taxon>
        <taxon>Enterobacterales</taxon>
        <taxon>Enterobacteriaceae</taxon>
        <taxon>Klebsiella/Raoultella group</taxon>
        <taxon>Klebsiella</taxon>
    </lineage>
</organism>
<evidence type="ECO:0000250" key="1"/>
<evidence type="ECO:0000250" key="2">
    <source>
        <dbReference type="UniProtKB" id="P15289"/>
    </source>
</evidence>
<evidence type="ECO:0000269" key="3">
    <source>
    </source>
</evidence>
<evidence type="ECO:0000305" key="4"/>
<feature type="signal peptide" evidence="3">
    <location>
        <begin position="1"/>
        <end position="20"/>
    </location>
</feature>
<feature type="chain" id="PRO_0000033447" description="Arylsulfatase">
    <location>
        <begin position="21"/>
        <end position="464"/>
    </location>
</feature>
<feature type="active site" description="Nucleophile" evidence="2">
    <location>
        <position position="72"/>
    </location>
</feature>
<feature type="active site" evidence="2">
    <location>
        <position position="134"/>
    </location>
</feature>
<feature type="binding site" evidence="1">
    <location>
        <position position="34"/>
    </location>
    <ligand>
        <name>Ca(2+)</name>
        <dbReference type="ChEBI" id="CHEBI:29108"/>
    </ligand>
</feature>
<feature type="binding site" evidence="1">
    <location>
        <position position="35"/>
    </location>
    <ligand>
        <name>Ca(2+)</name>
        <dbReference type="ChEBI" id="CHEBI:29108"/>
    </ligand>
</feature>
<feature type="binding site" description="via 3-oxoalanine" evidence="1">
    <location>
        <position position="72"/>
    </location>
    <ligand>
        <name>Ca(2+)</name>
        <dbReference type="ChEBI" id="CHEBI:29108"/>
    </ligand>
</feature>
<feature type="binding site" evidence="1">
    <location>
        <position position="329"/>
    </location>
    <ligand>
        <name>Ca(2+)</name>
        <dbReference type="ChEBI" id="CHEBI:29108"/>
    </ligand>
</feature>
<feature type="binding site" evidence="1">
    <location>
        <position position="330"/>
    </location>
    <ligand>
        <name>Ca(2+)</name>
        <dbReference type="ChEBI" id="CHEBI:29108"/>
    </ligand>
</feature>
<feature type="modified residue" description="3-oxoalanine (Ser)" evidence="2">
    <location>
        <position position="72"/>
    </location>
</feature>